<evidence type="ECO:0000255" key="1">
    <source>
        <dbReference type="HAMAP-Rule" id="MF_01038"/>
    </source>
</evidence>
<proteinExistence type="inferred from homology"/>
<gene>
    <name evidence="1" type="primary">gpmI</name>
    <name type="ordered locus">FP2135</name>
</gene>
<protein>
    <recommendedName>
        <fullName evidence="1">2,3-bisphosphoglycerate-independent phosphoglycerate mutase</fullName>
        <shortName evidence="1">BPG-independent PGAM</shortName>
        <shortName evidence="1">Phosphoglyceromutase</shortName>
        <shortName evidence="1">iPGM</shortName>
        <ecNumber evidence="1">5.4.2.12</ecNumber>
    </recommendedName>
</protein>
<dbReference type="EC" id="5.4.2.12" evidence="1"/>
<dbReference type="EMBL" id="AM398681">
    <property type="protein sequence ID" value="CAL44196.1"/>
    <property type="molecule type" value="Genomic_DNA"/>
</dbReference>
<dbReference type="RefSeq" id="WP_011964233.1">
    <property type="nucleotide sequence ID" value="NC_009613.3"/>
</dbReference>
<dbReference type="RefSeq" id="YP_001296998.1">
    <property type="nucleotide sequence ID" value="NC_009613.3"/>
</dbReference>
<dbReference type="SMR" id="A6H1H2"/>
<dbReference type="STRING" id="402612.FP2135"/>
<dbReference type="EnsemblBacteria" id="CAL44196">
    <property type="protein sequence ID" value="CAL44196"/>
    <property type="gene ID" value="FP2135"/>
</dbReference>
<dbReference type="GeneID" id="66551680"/>
<dbReference type="KEGG" id="fps:FP2135"/>
<dbReference type="PATRIC" id="fig|402612.5.peg.2162"/>
<dbReference type="eggNOG" id="COG0696">
    <property type="taxonomic scope" value="Bacteria"/>
</dbReference>
<dbReference type="HOGENOM" id="CLU_026099_2_0_10"/>
<dbReference type="OrthoDB" id="9800863at2"/>
<dbReference type="UniPathway" id="UPA00109">
    <property type="reaction ID" value="UER00186"/>
</dbReference>
<dbReference type="Proteomes" id="UP000006394">
    <property type="component" value="Chromosome"/>
</dbReference>
<dbReference type="GO" id="GO:0005829">
    <property type="term" value="C:cytosol"/>
    <property type="evidence" value="ECO:0007669"/>
    <property type="project" value="TreeGrafter"/>
</dbReference>
<dbReference type="GO" id="GO:0030145">
    <property type="term" value="F:manganese ion binding"/>
    <property type="evidence" value="ECO:0007669"/>
    <property type="project" value="UniProtKB-UniRule"/>
</dbReference>
<dbReference type="GO" id="GO:0004619">
    <property type="term" value="F:phosphoglycerate mutase activity"/>
    <property type="evidence" value="ECO:0007669"/>
    <property type="project" value="UniProtKB-EC"/>
</dbReference>
<dbReference type="GO" id="GO:0006007">
    <property type="term" value="P:glucose catabolic process"/>
    <property type="evidence" value="ECO:0007669"/>
    <property type="project" value="InterPro"/>
</dbReference>
<dbReference type="GO" id="GO:0006096">
    <property type="term" value="P:glycolytic process"/>
    <property type="evidence" value="ECO:0007669"/>
    <property type="project" value="UniProtKB-UniRule"/>
</dbReference>
<dbReference type="CDD" id="cd16010">
    <property type="entry name" value="iPGM"/>
    <property type="match status" value="1"/>
</dbReference>
<dbReference type="FunFam" id="3.40.1450.10:FF:000002">
    <property type="entry name" value="2,3-bisphosphoglycerate-independent phosphoglycerate mutase"/>
    <property type="match status" value="1"/>
</dbReference>
<dbReference type="Gene3D" id="3.40.720.10">
    <property type="entry name" value="Alkaline Phosphatase, subunit A"/>
    <property type="match status" value="1"/>
</dbReference>
<dbReference type="Gene3D" id="3.40.1450.10">
    <property type="entry name" value="BPG-independent phosphoglycerate mutase, domain B"/>
    <property type="match status" value="1"/>
</dbReference>
<dbReference type="HAMAP" id="MF_01038">
    <property type="entry name" value="GpmI"/>
    <property type="match status" value="1"/>
</dbReference>
<dbReference type="InterPro" id="IPR017850">
    <property type="entry name" value="Alkaline_phosphatase_core_sf"/>
</dbReference>
<dbReference type="InterPro" id="IPR011258">
    <property type="entry name" value="BPG-indep_PGM_N"/>
</dbReference>
<dbReference type="InterPro" id="IPR006124">
    <property type="entry name" value="Metalloenzyme"/>
</dbReference>
<dbReference type="InterPro" id="IPR036646">
    <property type="entry name" value="PGAM_B_sf"/>
</dbReference>
<dbReference type="InterPro" id="IPR005995">
    <property type="entry name" value="Pgm_bpd_ind"/>
</dbReference>
<dbReference type="NCBIfam" id="TIGR01307">
    <property type="entry name" value="pgm_bpd_ind"/>
    <property type="match status" value="1"/>
</dbReference>
<dbReference type="PANTHER" id="PTHR31637">
    <property type="entry name" value="2,3-BISPHOSPHOGLYCERATE-INDEPENDENT PHOSPHOGLYCERATE MUTASE"/>
    <property type="match status" value="1"/>
</dbReference>
<dbReference type="PANTHER" id="PTHR31637:SF0">
    <property type="entry name" value="2,3-BISPHOSPHOGLYCERATE-INDEPENDENT PHOSPHOGLYCERATE MUTASE"/>
    <property type="match status" value="1"/>
</dbReference>
<dbReference type="Pfam" id="PF06415">
    <property type="entry name" value="iPGM_N"/>
    <property type="match status" value="1"/>
</dbReference>
<dbReference type="Pfam" id="PF01676">
    <property type="entry name" value="Metalloenzyme"/>
    <property type="match status" value="1"/>
</dbReference>
<dbReference type="PIRSF" id="PIRSF001492">
    <property type="entry name" value="IPGAM"/>
    <property type="match status" value="1"/>
</dbReference>
<dbReference type="SUPFAM" id="SSF64158">
    <property type="entry name" value="2,3-Bisphosphoglycerate-independent phosphoglycerate mutase, substrate-binding domain"/>
    <property type="match status" value="1"/>
</dbReference>
<dbReference type="SUPFAM" id="SSF53649">
    <property type="entry name" value="Alkaline phosphatase-like"/>
    <property type="match status" value="1"/>
</dbReference>
<comment type="function">
    <text evidence="1">Catalyzes the interconversion of 2-phosphoglycerate and 3-phosphoglycerate.</text>
</comment>
<comment type="catalytic activity">
    <reaction evidence="1">
        <text>(2R)-2-phosphoglycerate = (2R)-3-phosphoglycerate</text>
        <dbReference type="Rhea" id="RHEA:15901"/>
        <dbReference type="ChEBI" id="CHEBI:58272"/>
        <dbReference type="ChEBI" id="CHEBI:58289"/>
        <dbReference type="EC" id="5.4.2.12"/>
    </reaction>
</comment>
<comment type="cofactor">
    <cofactor evidence="1">
        <name>Mn(2+)</name>
        <dbReference type="ChEBI" id="CHEBI:29035"/>
    </cofactor>
    <text evidence="1">Binds 2 manganese ions per subunit.</text>
</comment>
<comment type="pathway">
    <text evidence="1">Carbohydrate degradation; glycolysis; pyruvate from D-glyceraldehyde 3-phosphate: step 3/5.</text>
</comment>
<comment type="subunit">
    <text evidence="1">Monomer.</text>
</comment>
<comment type="similarity">
    <text evidence="1">Belongs to the BPG-independent phosphoglycerate mutase family.</text>
</comment>
<sequence length="505" mass="56282">MNKKVILMILDGWGKSPDPKVSAIDNANIPFINSLYKNYPSAQLRTDGLNVGLPEGQMGNSEVGHMNLGAGRIVYQDLAKINLAVQNKTLSQEKALKEAFQYAKENNKPIHFLGLLSDGGVHSHTSHLRGLLDAAQNFGLKKTFIHAFTDGRDVDPKSAIATIENLNKYIHNTPAKLASVIGRYYAMDRDKRWERIKLAYDLLVNGKGKPSQDAVLSISNSYQNNITDEFIEPIIMTDDNNNPIATIQEDDVVIFFNFRTDRGRELTEALSQQDFHEQNMHKLNLYYVTLTNYDETYKNVKVIYNKDNITQTLGEVLEKAGKKQIRIAETEKYPHVTFFFSGGREQPFLGESRILKNSPKVATYDLQPEMSAYELTEALIPEIEKTEADFICLNFANGDMVGHTGIMSAAIKACQAVNKCVEKVITAALAHNYTTIVIADHGNCETMINPDGTPNTAHTTNPVPIILVDKELKTIHDGVLGDIAPTILDLMGIKKPEVMTRNSLL</sequence>
<accession>A6H1H2</accession>
<name>GPMI_FLAPJ</name>
<keyword id="KW-0324">Glycolysis</keyword>
<keyword id="KW-0413">Isomerase</keyword>
<keyword id="KW-0464">Manganese</keyword>
<keyword id="KW-0479">Metal-binding</keyword>
<keyword id="KW-1185">Reference proteome</keyword>
<organism>
    <name type="scientific">Flavobacterium psychrophilum (strain ATCC 49511 / DSM 21280 / CIP 103535 / JIP02/86)</name>
    <dbReference type="NCBI Taxonomy" id="402612"/>
    <lineage>
        <taxon>Bacteria</taxon>
        <taxon>Pseudomonadati</taxon>
        <taxon>Bacteroidota</taxon>
        <taxon>Flavobacteriia</taxon>
        <taxon>Flavobacteriales</taxon>
        <taxon>Flavobacteriaceae</taxon>
        <taxon>Flavobacterium</taxon>
    </lineage>
</organism>
<reference key="1">
    <citation type="journal article" date="2007" name="Nat. Biotechnol.">
        <title>Complete genome sequence of the fish pathogen Flavobacterium psychrophilum.</title>
        <authorList>
            <person name="Duchaud E."/>
            <person name="Boussaha M."/>
            <person name="Loux V."/>
            <person name="Bernardet J.-F."/>
            <person name="Michel C."/>
            <person name="Kerouault B."/>
            <person name="Mondot S."/>
            <person name="Nicolas P."/>
            <person name="Bossy R."/>
            <person name="Caron C."/>
            <person name="Bessieres P."/>
            <person name="Gibrat J.-F."/>
            <person name="Claverol S."/>
            <person name="Dumetz F."/>
            <person name="Le Henaff M."/>
            <person name="Benmansour A."/>
        </authorList>
    </citation>
    <scope>NUCLEOTIDE SEQUENCE [LARGE SCALE GENOMIC DNA]</scope>
    <source>
        <strain>ATCC 49511 / DSM 21280 / CIP 103535 / JIP02/86</strain>
    </source>
</reference>
<feature type="chain" id="PRO_1000063967" description="2,3-bisphosphoglycerate-independent phosphoglycerate mutase">
    <location>
        <begin position="1"/>
        <end position="505"/>
    </location>
</feature>
<feature type="active site" description="Phosphoserine intermediate" evidence="1">
    <location>
        <position position="61"/>
    </location>
</feature>
<feature type="binding site" evidence="1">
    <location>
        <position position="11"/>
    </location>
    <ligand>
        <name>Mn(2+)</name>
        <dbReference type="ChEBI" id="CHEBI:29035"/>
        <label>2</label>
    </ligand>
</feature>
<feature type="binding site" evidence="1">
    <location>
        <position position="61"/>
    </location>
    <ligand>
        <name>Mn(2+)</name>
        <dbReference type="ChEBI" id="CHEBI:29035"/>
        <label>2</label>
    </ligand>
</feature>
<feature type="binding site" evidence="1">
    <location>
        <position position="122"/>
    </location>
    <ligand>
        <name>substrate</name>
    </ligand>
</feature>
<feature type="binding site" evidence="1">
    <location>
        <begin position="152"/>
        <end position="153"/>
    </location>
    <ligand>
        <name>substrate</name>
    </ligand>
</feature>
<feature type="binding site" evidence="1">
    <location>
        <position position="183"/>
    </location>
    <ligand>
        <name>substrate</name>
    </ligand>
</feature>
<feature type="binding site" evidence="1">
    <location>
        <position position="189"/>
    </location>
    <ligand>
        <name>substrate</name>
    </ligand>
</feature>
<feature type="binding site" evidence="1">
    <location>
        <begin position="259"/>
        <end position="262"/>
    </location>
    <ligand>
        <name>substrate</name>
    </ligand>
</feature>
<feature type="binding site" evidence="1">
    <location>
        <position position="332"/>
    </location>
    <ligand>
        <name>substrate</name>
    </ligand>
</feature>
<feature type="binding site" evidence="1">
    <location>
        <position position="399"/>
    </location>
    <ligand>
        <name>Mn(2+)</name>
        <dbReference type="ChEBI" id="CHEBI:29035"/>
        <label>1</label>
    </ligand>
</feature>
<feature type="binding site" evidence="1">
    <location>
        <position position="403"/>
    </location>
    <ligand>
        <name>Mn(2+)</name>
        <dbReference type="ChEBI" id="CHEBI:29035"/>
        <label>1</label>
    </ligand>
</feature>
<feature type="binding site" evidence="1">
    <location>
        <position position="440"/>
    </location>
    <ligand>
        <name>Mn(2+)</name>
        <dbReference type="ChEBI" id="CHEBI:29035"/>
        <label>2</label>
    </ligand>
</feature>
<feature type="binding site" evidence="1">
    <location>
        <position position="441"/>
    </location>
    <ligand>
        <name>Mn(2+)</name>
        <dbReference type="ChEBI" id="CHEBI:29035"/>
        <label>2</label>
    </ligand>
</feature>
<feature type="binding site" evidence="1">
    <location>
        <position position="458"/>
    </location>
    <ligand>
        <name>Mn(2+)</name>
        <dbReference type="ChEBI" id="CHEBI:29035"/>
        <label>1</label>
    </ligand>
</feature>